<evidence type="ECO:0000269" key="1">
    <source>
    </source>
</evidence>
<evidence type="ECO:0000269" key="2">
    <source>
    </source>
</evidence>
<evidence type="ECO:0000269" key="3">
    <source>
    </source>
</evidence>
<evidence type="ECO:0000303" key="4">
    <source>
    </source>
</evidence>
<evidence type="ECO:0000303" key="5">
    <source>
    </source>
</evidence>
<evidence type="ECO:0000305" key="6"/>
<evidence type="ECO:0000305" key="7">
    <source>
    </source>
</evidence>
<evidence type="ECO:0000305" key="8">
    <source>
    </source>
</evidence>
<keyword id="KW-0963">Cytoplasm</keyword>
<keyword id="KW-1185">Reference proteome</keyword>
<keyword id="KW-0687">Ribonucleoprotein</keyword>
<keyword id="KW-0689">Ribosomal protein</keyword>
<dbReference type="EMBL" id="U19729">
    <property type="protein sequence ID" value="AAB82359.1"/>
    <property type="molecule type" value="Genomic_DNA"/>
</dbReference>
<dbReference type="EMBL" id="BK006945">
    <property type="protein sequence ID" value="DAA09705.1"/>
    <property type="molecule type" value="Genomic_DNA"/>
</dbReference>
<dbReference type="PIR" id="S55962">
    <property type="entry name" value="S55962"/>
</dbReference>
<dbReference type="RefSeq" id="NP_013510.3">
    <property type="nucleotide sequence ID" value="NM_001182294.3"/>
</dbReference>
<dbReference type="SMR" id="P0C2H9"/>
<dbReference type="BioGRID" id="31663">
    <property type="interactions" value="202"/>
</dbReference>
<dbReference type="ComplexPortal" id="CPX-1601">
    <property type="entry name" value="60S cytosolic large ribosomal subunit"/>
</dbReference>
<dbReference type="DIP" id="DIP-29387N"/>
<dbReference type="FunCoup" id="P0C2H9">
    <property type="interactions" value="1050"/>
</dbReference>
<dbReference type="IntAct" id="P0C2H9">
    <property type="interactions" value="33"/>
</dbReference>
<dbReference type="MINT" id="P0C2H9"/>
<dbReference type="STRING" id="4932.YLR406C"/>
<dbReference type="iPTMnet" id="P0C2H9"/>
<dbReference type="PaxDb" id="4932-YLR406C"/>
<dbReference type="PeptideAtlas" id="P0C2H9"/>
<dbReference type="EnsemblFungi" id="YLR406C_mRNA">
    <property type="protein sequence ID" value="YLR406C"/>
    <property type="gene ID" value="YLR406C"/>
</dbReference>
<dbReference type="GeneID" id="851122"/>
<dbReference type="KEGG" id="sce:YLR406C"/>
<dbReference type="AGR" id="SGD:S000004398"/>
<dbReference type="SGD" id="S000004398">
    <property type="gene designation" value="RPL31B"/>
</dbReference>
<dbReference type="VEuPathDB" id="FungiDB:YLR406C"/>
<dbReference type="eggNOG" id="KOG0893">
    <property type="taxonomic scope" value="Eukaryota"/>
</dbReference>
<dbReference type="GeneTree" id="ENSGT00950000183030"/>
<dbReference type="HOGENOM" id="CLU_112570_1_1_1"/>
<dbReference type="InParanoid" id="P0C2H9"/>
<dbReference type="OMA" id="EVWKQGI"/>
<dbReference type="OrthoDB" id="9739313at2759"/>
<dbReference type="BioCyc" id="YEAST:G3O-32468-MONOMER"/>
<dbReference type="Reactome" id="R-SCE-156827">
    <property type="pathway name" value="L13a-mediated translational silencing of Ceruloplasmin expression"/>
</dbReference>
<dbReference type="Reactome" id="R-SCE-1799339">
    <property type="pathway name" value="SRP-dependent cotranslational protein targeting to membrane"/>
</dbReference>
<dbReference type="Reactome" id="R-SCE-72689">
    <property type="pathway name" value="Formation of a pool of free 40S subunits"/>
</dbReference>
<dbReference type="Reactome" id="R-SCE-72706">
    <property type="pathway name" value="GTP hydrolysis and joining of the 60S ribosomal subunit"/>
</dbReference>
<dbReference type="Reactome" id="R-SCE-975956">
    <property type="pathway name" value="Nonsense Mediated Decay (NMD) independent of the Exon Junction Complex (EJC)"/>
</dbReference>
<dbReference type="Reactome" id="R-SCE-975957">
    <property type="pathway name" value="Nonsense Mediated Decay (NMD) enhanced by the Exon Junction Complex (EJC)"/>
</dbReference>
<dbReference type="BioGRID-ORCS" id="851122">
    <property type="hits" value="3 hits in 10 CRISPR screens"/>
</dbReference>
<dbReference type="PRO" id="PR:P0C2H9"/>
<dbReference type="Proteomes" id="UP000002311">
    <property type="component" value="Chromosome XII"/>
</dbReference>
<dbReference type="RNAct" id="P0C2H9">
    <property type="molecule type" value="protein"/>
</dbReference>
<dbReference type="GO" id="GO:0005829">
    <property type="term" value="C:cytosol"/>
    <property type="evidence" value="ECO:0000304"/>
    <property type="project" value="Reactome"/>
</dbReference>
<dbReference type="GO" id="GO:0022625">
    <property type="term" value="C:cytosolic large ribosomal subunit"/>
    <property type="evidence" value="ECO:0000314"/>
    <property type="project" value="SGD"/>
</dbReference>
<dbReference type="GO" id="GO:0003735">
    <property type="term" value="F:structural constituent of ribosome"/>
    <property type="evidence" value="ECO:0000314"/>
    <property type="project" value="SGD"/>
</dbReference>
<dbReference type="GO" id="GO:0002181">
    <property type="term" value="P:cytoplasmic translation"/>
    <property type="evidence" value="ECO:0000314"/>
    <property type="project" value="SGD"/>
</dbReference>
<dbReference type="GO" id="GO:0006450">
    <property type="term" value="P:regulation of translational fidelity"/>
    <property type="evidence" value="ECO:0000315"/>
    <property type="project" value="SGD"/>
</dbReference>
<dbReference type="CDD" id="cd00463">
    <property type="entry name" value="Ribosomal_L31e"/>
    <property type="match status" value="1"/>
</dbReference>
<dbReference type="FunFam" id="3.10.440.10:FF:000001">
    <property type="entry name" value="60S ribosomal protein L31"/>
    <property type="match status" value="1"/>
</dbReference>
<dbReference type="Gene3D" id="3.10.440.10">
    <property type="match status" value="1"/>
</dbReference>
<dbReference type="InterPro" id="IPR000054">
    <property type="entry name" value="Ribosomal_eL31"/>
</dbReference>
<dbReference type="InterPro" id="IPR020052">
    <property type="entry name" value="Ribosomal_eL31_CS"/>
</dbReference>
<dbReference type="InterPro" id="IPR023621">
    <property type="entry name" value="Ribosomal_eL31_dom_sf"/>
</dbReference>
<dbReference type="PANTHER" id="PTHR10956">
    <property type="entry name" value="60S RIBOSOMAL PROTEIN L31"/>
    <property type="match status" value="1"/>
</dbReference>
<dbReference type="PANTHER" id="PTHR10956:SF0">
    <property type="entry name" value="60S RIBOSOMAL PROTEIN L31"/>
    <property type="match status" value="1"/>
</dbReference>
<dbReference type="Pfam" id="PF01198">
    <property type="entry name" value="Ribosomal_L31e"/>
    <property type="match status" value="1"/>
</dbReference>
<dbReference type="SMART" id="SM01380">
    <property type="entry name" value="Ribosomal_L31e"/>
    <property type="match status" value="1"/>
</dbReference>
<dbReference type="SUPFAM" id="SSF54575">
    <property type="entry name" value="Ribosomal protein L31e"/>
    <property type="match status" value="1"/>
</dbReference>
<dbReference type="PROSITE" id="PS01144">
    <property type="entry name" value="RIBOSOMAL_L31E"/>
    <property type="match status" value="1"/>
</dbReference>
<accession>P0C2H9</accession>
<accession>D6VZ39</accession>
<accession>P04649</accession>
<accession>Q3E7B8</accession>
<comment type="function">
    <text evidence="7">Component of the ribosome, a large ribonucleoprotein complex responsible for the synthesis of proteins in the cell. The small ribosomal subunit (SSU) binds messenger RNAs (mRNAs) and translates the encoded message by selecting cognate aminoacyl-transfer RNA (tRNA) molecules. The large subunit (LSU) contains the ribosomal catalytic site termed the peptidyl transferase center (PTC), which catalyzes the formation of peptide bonds, thereby polymerizing the amino acids delivered by tRNAs into a polypeptide chain. The nascent polypeptides leave the ribosome through a tunnel in the LSU and interact with protein factors that function in enzymatic processing, targeting, and the membrane insertion of nascent chains at the exit of the ribosomal tunnel.</text>
</comment>
<comment type="subunit">
    <text evidence="3 8">Component of the large ribosomal subunit (LSU). Mature yeast ribosomes consist of a small (40S) and a large (60S) subunit. The 40S small subunit contains 1 molecule of ribosomal RNA (18S rRNA) and 33 different proteins (encoded by 57 genes). The large 60S subunit contains 3 rRNA molecules (25S, 5.8S and 5S rRNA) and 46 different proteins (encoded by 81 genes) (PubMed:22096102, PubMed:9559554).</text>
</comment>
<comment type="subcellular location">
    <subcellularLocation>
        <location evidence="1 3">Cytoplasm</location>
    </subcellularLocation>
</comment>
<comment type="miscellaneous">
    <text evidence="2">Present with 57500 molecules/cell in log phase SD medium.</text>
</comment>
<comment type="miscellaneous">
    <text evidence="6">There are 2 genes for eL31 in yeast.</text>
</comment>
<comment type="similarity">
    <text evidence="6">Belongs to the eukaryotic ribosomal protein eL31 family.</text>
</comment>
<name>RL31B_YEAST</name>
<proteinExistence type="evidence at protein level"/>
<organism>
    <name type="scientific">Saccharomyces cerevisiae (strain ATCC 204508 / S288c)</name>
    <name type="common">Baker's yeast</name>
    <dbReference type="NCBI Taxonomy" id="559292"/>
    <lineage>
        <taxon>Eukaryota</taxon>
        <taxon>Fungi</taxon>
        <taxon>Dikarya</taxon>
        <taxon>Ascomycota</taxon>
        <taxon>Saccharomycotina</taxon>
        <taxon>Saccharomycetes</taxon>
        <taxon>Saccharomycetales</taxon>
        <taxon>Saccharomycetaceae</taxon>
        <taxon>Saccharomyces</taxon>
    </lineage>
</organism>
<sequence>MAGLKDVVTREYTINLHKRLHGVSFKKRAPRAVKEIKKFAKLHMGTEDVRLAPELNQAIWKRGVKGVEYRLRLRISRKRNEEEDAKNPLFSYVEPVLVASAKGLQTVVVEEDA</sequence>
<protein>
    <recommendedName>
        <fullName evidence="4">Large ribosomal subunit protein eL31B</fullName>
    </recommendedName>
    <alternativeName>
        <fullName evidence="5">60S ribosomal protein L31-B</fullName>
    </alternativeName>
    <alternativeName>
        <fullName>L34</fullName>
    </alternativeName>
    <alternativeName>
        <fullName>YL28</fullName>
    </alternativeName>
</protein>
<feature type="chain" id="PRO_0000278968" description="Large ribosomal subunit protein eL31B">
    <location>
        <begin position="1"/>
        <end position="113"/>
    </location>
</feature>
<gene>
    <name evidence="5" type="primary">RPL31B</name>
    <name type="synonym">RPL34</name>
    <name type="synonym">RPL34B</name>
    <name type="ordered locus">YLR406C</name>
</gene>
<reference key="1">
    <citation type="journal article" date="1997" name="Nature">
        <title>The nucleotide sequence of Saccharomyces cerevisiae chromosome XII.</title>
        <authorList>
            <person name="Johnston M."/>
            <person name="Hillier L.W."/>
            <person name="Riles L."/>
            <person name="Albermann K."/>
            <person name="Andre B."/>
            <person name="Ansorge W."/>
            <person name="Benes V."/>
            <person name="Brueckner M."/>
            <person name="Delius H."/>
            <person name="Dubois E."/>
            <person name="Duesterhoeft A."/>
            <person name="Entian K.-D."/>
            <person name="Floeth M."/>
            <person name="Goffeau A."/>
            <person name="Hebling U."/>
            <person name="Heumann K."/>
            <person name="Heuss-Neitzel D."/>
            <person name="Hilbert H."/>
            <person name="Hilger F."/>
            <person name="Kleine K."/>
            <person name="Koetter P."/>
            <person name="Louis E.J."/>
            <person name="Messenguy F."/>
            <person name="Mewes H.-W."/>
            <person name="Miosga T."/>
            <person name="Moestl D."/>
            <person name="Mueller-Auer S."/>
            <person name="Nentwich U."/>
            <person name="Obermaier B."/>
            <person name="Piravandi E."/>
            <person name="Pohl T.M."/>
            <person name="Portetelle D."/>
            <person name="Purnelle B."/>
            <person name="Rechmann S."/>
            <person name="Rieger M."/>
            <person name="Rinke M."/>
            <person name="Rose M."/>
            <person name="Scharfe M."/>
            <person name="Scherens B."/>
            <person name="Scholler P."/>
            <person name="Schwager C."/>
            <person name="Schwarz S."/>
            <person name="Underwood A.P."/>
            <person name="Urrestarazu L.A."/>
            <person name="Vandenbol M."/>
            <person name="Verhasselt P."/>
            <person name="Vierendeels F."/>
            <person name="Voet M."/>
            <person name="Volckaert G."/>
            <person name="Voss H."/>
            <person name="Wambutt R."/>
            <person name="Wedler E."/>
            <person name="Wedler H."/>
            <person name="Zimmermann F.K."/>
            <person name="Zollner A."/>
            <person name="Hani J."/>
            <person name="Hoheisel J.D."/>
        </authorList>
    </citation>
    <scope>NUCLEOTIDE SEQUENCE [LARGE SCALE GENOMIC DNA]</scope>
    <source>
        <strain>ATCC 204508 / S288c</strain>
    </source>
</reference>
<reference key="2">
    <citation type="journal article" date="2014" name="G3 (Bethesda)">
        <title>The reference genome sequence of Saccharomyces cerevisiae: Then and now.</title>
        <authorList>
            <person name="Engel S.R."/>
            <person name="Dietrich F.S."/>
            <person name="Fisk D.G."/>
            <person name="Binkley G."/>
            <person name="Balakrishnan R."/>
            <person name="Costanzo M.C."/>
            <person name="Dwight S.S."/>
            <person name="Hitz B.C."/>
            <person name="Karra K."/>
            <person name="Nash R.S."/>
            <person name="Weng S."/>
            <person name="Wong E.D."/>
            <person name="Lloyd P."/>
            <person name="Skrzypek M.S."/>
            <person name="Miyasato S.R."/>
            <person name="Simison M."/>
            <person name="Cherry J.M."/>
        </authorList>
    </citation>
    <scope>GENOME REANNOTATION</scope>
    <source>
        <strain>ATCC 204508 / S288c</strain>
    </source>
</reference>
<reference key="3">
    <citation type="journal article" date="1998" name="Yeast">
        <title>The list of cytoplasmic ribosomal proteins of Saccharomyces cerevisiae.</title>
        <authorList>
            <person name="Planta R.J."/>
            <person name="Mager W.H."/>
        </authorList>
    </citation>
    <scope>NOMENCLATURE</scope>
    <scope>SUBUNIT</scope>
</reference>
<reference key="4">
    <citation type="journal article" date="2003" name="Nature">
        <title>Global analysis of protein localization in budding yeast.</title>
        <authorList>
            <person name="Huh W.-K."/>
            <person name="Falvo J.V."/>
            <person name="Gerke L.C."/>
            <person name="Carroll A.S."/>
            <person name="Howson R.W."/>
            <person name="Weissman J.S."/>
            <person name="O'Shea E.K."/>
        </authorList>
    </citation>
    <scope>SUBCELLULAR LOCATION [LARGE SCALE ANALYSIS]</scope>
</reference>
<reference key="5">
    <citation type="journal article" date="2003" name="Nature">
        <title>Global analysis of protein expression in yeast.</title>
        <authorList>
            <person name="Ghaemmaghami S."/>
            <person name="Huh W.-K."/>
            <person name="Bower K."/>
            <person name="Howson R.W."/>
            <person name="Belle A."/>
            <person name="Dephoure N."/>
            <person name="O'Shea E.K."/>
            <person name="Weissman J.S."/>
        </authorList>
    </citation>
    <scope>LEVEL OF PROTEIN EXPRESSION [LARGE SCALE ANALYSIS]</scope>
</reference>
<reference key="6">
    <citation type="journal article" date="2011" name="Science">
        <title>The structure of the eukaryotic ribosome at 3.0 A resolution.</title>
        <authorList>
            <person name="Ben-Shem A."/>
            <person name="Garreau de Loubresse N."/>
            <person name="Melnikov S."/>
            <person name="Jenner L."/>
            <person name="Yusupova G."/>
            <person name="Yusupov M."/>
        </authorList>
    </citation>
    <scope>SUBUNIT</scope>
    <scope>SUBCELLULAR LOCATION</scope>
</reference>
<reference key="7">
    <citation type="journal article" date="2014" name="Curr. Opin. Struct. Biol.">
        <title>A new system for naming ribosomal proteins.</title>
        <authorList>
            <person name="Ban N."/>
            <person name="Beckmann R."/>
            <person name="Cate J.H.D."/>
            <person name="Dinman J.D."/>
            <person name="Dragon F."/>
            <person name="Ellis S.R."/>
            <person name="Lafontaine D.L.J."/>
            <person name="Lindahl L."/>
            <person name="Liljas A."/>
            <person name="Lipton J.M."/>
            <person name="McAlear M.A."/>
            <person name="Moore P.B."/>
            <person name="Noller H.F."/>
            <person name="Ortega J."/>
            <person name="Panse V.G."/>
            <person name="Ramakrishnan V."/>
            <person name="Spahn C.M.T."/>
            <person name="Steitz T.A."/>
            <person name="Tchorzewski M."/>
            <person name="Tollervey D."/>
            <person name="Warren A.J."/>
            <person name="Williamson J.R."/>
            <person name="Wilson D."/>
            <person name="Yonath A."/>
            <person name="Yusupov M."/>
        </authorList>
    </citation>
    <scope>NOMENCLATURE</scope>
</reference>